<protein>
    <recommendedName>
        <fullName>Redox-responsive transcriptional regulator WhiB3</fullName>
    </recommendedName>
</protein>
<feature type="chain" id="PRO_0000420394" description="Redox-responsive transcriptional regulator WhiB3">
    <location>
        <begin position="1"/>
        <end position="96"/>
    </location>
</feature>
<feature type="domain" description="4Fe-4S Wbl-type">
    <location>
        <begin position="22"/>
        <end position="86"/>
    </location>
</feature>
<feature type="binding site" evidence="2">
    <location>
        <position position="23"/>
    </location>
    <ligand>
        <name>[4Fe-4S] cluster</name>
        <dbReference type="ChEBI" id="CHEBI:49883"/>
    </ligand>
</feature>
<feature type="binding site" evidence="2">
    <location>
        <position position="53"/>
    </location>
    <ligand>
        <name>[4Fe-4S] cluster</name>
        <dbReference type="ChEBI" id="CHEBI:49883"/>
    </ligand>
</feature>
<feature type="binding site" evidence="2">
    <location>
        <position position="56"/>
    </location>
    <ligand>
        <name>[4Fe-4S] cluster</name>
        <dbReference type="ChEBI" id="CHEBI:49883"/>
    </ligand>
</feature>
<feature type="binding site" evidence="2">
    <location>
        <position position="62"/>
    </location>
    <ligand>
        <name>[4Fe-4S] cluster</name>
        <dbReference type="ChEBI" id="CHEBI:49883"/>
    </ligand>
</feature>
<keyword id="KW-0004">4Fe-4S</keyword>
<keyword id="KW-0963">Cytoplasm</keyword>
<keyword id="KW-1015">Disulfide bond</keyword>
<keyword id="KW-0238">DNA-binding</keyword>
<keyword id="KW-0408">Iron</keyword>
<keyword id="KW-0411">Iron-sulfur</keyword>
<keyword id="KW-0479">Metal-binding</keyword>
<keyword id="KW-1185">Reference proteome</keyword>
<keyword id="KW-0804">Transcription</keyword>
<keyword id="KW-0805">Transcription regulation</keyword>
<gene>
    <name type="primary">whiB3</name>
    <name type="ordered locus">MSMEG_1597</name>
    <name type="ordered locus">MSMEI_1558</name>
</gene>
<accession>A0QST8</accession>
<accession>Q9Z6E9</accession>
<dbReference type="EMBL" id="AF073300">
    <property type="protein sequence ID" value="AAD19334.1"/>
    <property type="molecule type" value="Genomic_DNA"/>
</dbReference>
<dbReference type="EMBL" id="CP000480">
    <property type="protein sequence ID" value="ABK73466.1"/>
    <property type="molecule type" value="Genomic_DNA"/>
</dbReference>
<dbReference type="EMBL" id="CP001663">
    <property type="protein sequence ID" value="AFP38031.1"/>
    <property type="molecule type" value="Genomic_DNA"/>
</dbReference>
<dbReference type="RefSeq" id="WP_003893002.1">
    <property type="nucleotide sequence ID" value="NZ_SIJM01000023.1"/>
</dbReference>
<dbReference type="RefSeq" id="YP_885976.1">
    <property type="nucleotide sequence ID" value="NC_008596.1"/>
</dbReference>
<dbReference type="SMR" id="A0QST8"/>
<dbReference type="STRING" id="246196.MSMEG_1597"/>
<dbReference type="PaxDb" id="246196-MSMEI_1558"/>
<dbReference type="KEGG" id="msb:LJ00_07975"/>
<dbReference type="KEGG" id="msg:MSMEI_1558"/>
<dbReference type="KEGG" id="msm:MSMEG_1597"/>
<dbReference type="PATRIC" id="fig|246196.19.peg.1583"/>
<dbReference type="eggNOG" id="ENOG5032S23">
    <property type="taxonomic scope" value="Bacteria"/>
</dbReference>
<dbReference type="OrthoDB" id="4954884at2"/>
<dbReference type="Proteomes" id="UP000000757">
    <property type="component" value="Chromosome"/>
</dbReference>
<dbReference type="Proteomes" id="UP000006158">
    <property type="component" value="Chromosome"/>
</dbReference>
<dbReference type="GO" id="GO:0005737">
    <property type="term" value="C:cytoplasm"/>
    <property type="evidence" value="ECO:0007669"/>
    <property type="project" value="UniProtKB-SubCell"/>
</dbReference>
<dbReference type="GO" id="GO:0051539">
    <property type="term" value="F:4 iron, 4 sulfur cluster binding"/>
    <property type="evidence" value="ECO:0007669"/>
    <property type="project" value="UniProtKB-UniRule"/>
</dbReference>
<dbReference type="GO" id="GO:0035731">
    <property type="term" value="F:dinitrosyl-iron complex binding"/>
    <property type="evidence" value="ECO:0007669"/>
    <property type="project" value="UniProtKB-UniRule"/>
</dbReference>
<dbReference type="GO" id="GO:0003677">
    <property type="term" value="F:DNA binding"/>
    <property type="evidence" value="ECO:0007669"/>
    <property type="project" value="UniProtKB-UniRule"/>
</dbReference>
<dbReference type="GO" id="GO:0046872">
    <property type="term" value="F:metal ion binding"/>
    <property type="evidence" value="ECO:0007669"/>
    <property type="project" value="UniProtKB-KW"/>
</dbReference>
<dbReference type="GO" id="GO:0047134">
    <property type="term" value="F:protein-disulfide reductase [NAD(P)H] activity"/>
    <property type="evidence" value="ECO:0007669"/>
    <property type="project" value="TreeGrafter"/>
</dbReference>
<dbReference type="GO" id="GO:0045454">
    <property type="term" value="P:cell redox homeostasis"/>
    <property type="evidence" value="ECO:0007669"/>
    <property type="project" value="TreeGrafter"/>
</dbReference>
<dbReference type="GO" id="GO:0045892">
    <property type="term" value="P:negative regulation of DNA-templated transcription"/>
    <property type="evidence" value="ECO:0007669"/>
    <property type="project" value="TreeGrafter"/>
</dbReference>
<dbReference type="HAMAP" id="MF_01479">
    <property type="entry name" value="WhiB"/>
    <property type="match status" value="1"/>
</dbReference>
<dbReference type="InterPro" id="IPR034768">
    <property type="entry name" value="4FE4S_WBL"/>
</dbReference>
<dbReference type="InterPro" id="IPR003482">
    <property type="entry name" value="Whib"/>
</dbReference>
<dbReference type="PANTHER" id="PTHR38839:SF5">
    <property type="entry name" value="TRANSCRIPTIONAL REGULATOR WHID"/>
    <property type="match status" value="1"/>
</dbReference>
<dbReference type="PANTHER" id="PTHR38839">
    <property type="entry name" value="TRANSCRIPTIONAL REGULATOR WHID-RELATED"/>
    <property type="match status" value="1"/>
</dbReference>
<dbReference type="Pfam" id="PF02467">
    <property type="entry name" value="Whib"/>
    <property type="match status" value="1"/>
</dbReference>
<dbReference type="PROSITE" id="PS51674">
    <property type="entry name" value="4FE4S_WBL"/>
    <property type="match status" value="1"/>
</dbReference>
<organism>
    <name type="scientific">Mycolicibacterium smegmatis (strain ATCC 700084 / mc(2)155)</name>
    <name type="common">Mycobacterium smegmatis</name>
    <dbReference type="NCBI Taxonomy" id="246196"/>
    <lineage>
        <taxon>Bacteria</taxon>
        <taxon>Bacillati</taxon>
        <taxon>Actinomycetota</taxon>
        <taxon>Actinomycetes</taxon>
        <taxon>Mycobacteriales</taxon>
        <taxon>Mycobacteriaceae</taxon>
        <taxon>Mycolicibacterium</taxon>
    </lineage>
</organism>
<comment type="function">
    <text evidence="1">A redox-sensitive transcriptional regulator. Maintains intracellular redox homeostasis by regulating catabolic metabolism and polyketide biosynthesis. Regulates expression of the redox buffer ergothioneine (ERG). In concert with myothiol (MSH), another redox buffer, responds to low pH leading to acid resistance. The apo- but not holo-form probably binds DNA (By similarity).</text>
</comment>
<comment type="cofactor">
    <cofactor evidence="2">
        <name>[4Fe-4S] cluster</name>
        <dbReference type="ChEBI" id="CHEBI:49883"/>
    </cofactor>
    <text evidence="2">Binds 1 [4Fe-4S] cluster per subunit. Following nitrosylation of the [4Fe-4S] cluster binds 1 [4Fe-8(NO)] cluster per subunit.</text>
</comment>
<comment type="subcellular location">
    <subcellularLocation>
        <location evidence="1">Cytoplasm</location>
    </subcellularLocation>
</comment>
<comment type="induction">
    <text evidence="3">Constitutively expressed.</text>
</comment>
<comment type="PTM">
    <text evidence="2">The Fe-S cluster can be nitrosylated by nitric oxide (NO).</text>
</comment>
<comment type="PTM">
    <text evidence="2">Upon Fe-S cluster removal intramolecular disulfide bonds are formed.</text>
</comment>
<comment type="disruption phenotype">
    <text evidence="3">Not essential.</text>
</comment>
<comment type="similarity">
    <text evidence="4">Belongs to the WhiB family.</text>
</comment>
<proteinExistence type="evidence at transcript level"/>
<sequence>MPQPQQLPGPNADIWDWQMRGLCRGVDSSMFFHPDGERGRARAQREMRAKEMCRSCPVIAQCRSHALAVGEPYGIWGGLSESERELLLKRGIRRSA</sequence>
<name>WHIB3_MYCS2</name>
<evidence type="ECO:0000250" key="1"/>
<evidence type="ECO:0000250" key="2">
    <source>
        <dbReference type="UniProtKB" id="P9WF41"/>
    </source>
</evidence>
<evidence type="ECO:0000269" key="3">
    <source>
    </source>
</evidence>
<evidence type="ECO:0000305" key="4"/>
<reference key="1">
    <citation type="journal article" date="1999" name="Res. Microbiol.">
        <title>Molecular genetic characterisation of whiB3, a mycobacterial homologue of a Streptomyces sporulation factor.</title>
        <authorList>
            <person name="Hutter B."/>
            <person name="Dick T."/>
        </authorList>
    </citation>
    <scope>NUCLEOTIDE SEQUENCE [GENOMIC DNA]</scope>
    <scope>INDUCTION</scope>
    <scope>DISRUPTION PHENOTYPE</scope>
    <source>
        <strain>ATCC 700084 / mc(2)155</strain>
    </source>
</reference>
<reference key="2">
    <citation type="submission" date="2006-10" db="EMBL/GenBank/DDBJ databases">
        <authorList>
            <person name="Fleischmann R.D."/>
            <person name="Dodson R.J."/>
            <person name="Haft D.H."/>
            <person name="Merkel J.S."/>
            <person name="Nelson W.C."/>
            <person name="Fraser C.M."/>
        </authorList>
    </citation>
    <scope>NUCLEOTIDE SEQUENCE [LARGE SCALE GENOMIC DNA]</scope>
    <source>
        <strain>ATCC 700084 / mc(2)155</strain>
    </source>
</reference>
<reference key="3">
    <citation type="journal article" date="2007" name="Genome Biol.">
        <title>Interrupted coding sequences in Mycobacterium smegmatis: authentic mutations or sequencing errors?</title>
        <authorList>
            <person name="Deshayes C."/>
            <person name="Perrodou E."/>
            <person name="Gallien S."/>
            <person name="Euphrasie D."/>
            <person name="Schaeffer C."/>
            <person name="Van-Dorsselaer A."/>
            <person name="Poch O."/>
            <person name="Lecompte O."/>
            <person name="Reyrat J.-M."/>
        </authorList>
    </citation>
    <scope>NUCLEOTIDE SEQUENCE [LARGE SCALE GENOMIC DNA]</scope>
    <source>
        <strain>ATCC 700084 / mc(2)155</strain>
    </source>
</reference>
<reference key="4">
    <citation type="journal article" date="2009" name="Genome Res.">
        <title>Ortho-proteogenomics: multiple proteomes investigation through orthology and a new MS-based protocol.</title>
        <authorList>
            <person name="Gallien S."/>
            <person name="Perrodou E."/>
            <person name="Carapito C."/>
            <person name="Deshayes C."/>
            <person name="Reyrat J.-M."/>
            <person name="Van Dorsselaer A."/>
            <person name="Poch O."/>
            <person name="Schaeffer C."/>
            <person name="Lecompte O."/>
        </authorList>
    </citation>
    <scope>NUCLEOTIDE SEQUENCE [LARGE SCALE GENOMIC DNA]</scope>
    <source>
        <strain>ATCC 700084 / mc(2)155</strain>
    </source>
</reference>